<keyword id="KW-0963">Cytoplasm</keyword>
<keyword id="KW-0240">DNA-directed RNA polymerase</keyword>
<keyword id="KW-0479">Metal-binding</keyword>
<keyword id="KW-0548">Nucleotidyltransferase</keyword>
<keyword id="KW-0804">Transcription</keyword>
<keyword id="KW-0808">Transferase</keyword>
<keyword id="KW-0862">Zinc</keyword>
<organism>
    <name type="scientific">Saccharolobus islandicus (strain Y.G.57.14 / Yellowstone #1)</name>
    <name type="common">Sulfolobus islandicus</name>
    <dbReference type="NCBI Taxonomy" id="439386"/>
    <lineage>
        <taxon>Archaea</taxon>
        <taxon>Thermoproteota</taxon>
        <taxon>Thermoprotei</taxon>
        <taxon>Sulfolobales</taxon>
        <taxon>Sulfolobaceae</taxon>
        <taxon>Saccharolobus</taxon>
    </lineage>
</organism>
<feature type="chain" id="PRO_1000212278" description="DNA-directed RNA polymerase subunit Rpo12">
    <location>
        <begin position="1"/>
        <end position="48"/>
    </location>
</feature>
<feature type="binding site" evidence="1">
    <location>
        <position position="9"/>
    </location>
    <ligand>
        <name>Zn(2+)</name>
        <dbReference type="ChEBI" id="CHEBI:29105"/>
    </ligand>
</feature>
<feature type="binding site" evidence="1">
    <location>
        <position position="26"/>
    </location>
    <ligand>
        <name>Zn(2+)</name>
        <dbReference type="ChEBI" id="CHEBI:29105"/>
    </ligand>
</feature>
<feature type="binding site" evidence="1">
    <location>
        <position position="29"/>
    </location>
    <ligand>
        <name>Zn(2+)</name>
        <dbReference type="ChEBI" id="CHEBI:29105"/>
    </ligand>
</feature>
<name>RPO12_SACI7</name>
<protein>
    <recommendedName>
        <fullName evidence="1">DNA-directed RNA polymerase subunit Rpo12</fullName>
        <ecNumber evidence="1">2.7.7.6</ecNumber>
    </recommendedName>
    <alternativeName>
        <fullName evidence="1">DNA-directed RNA polymerase subunit P</fullName>
    </alternativeName>
</protein>
<gene>
    <name evidence="1" type="primary">rpo12</name>
    <name evidence="1" type="synonym">rpoP</name>
    <name type="ordered locus">YG5714_1777</name>
</gene>
<evidence type="ECO:0000255" key="1">
    <source>
        <dbReference type="HAMAP-Rule" id="MF_00615"/>
    </source>
</evidence>
<dbReference type="EC" id="2.7.7.6" evidence="1"/>
<dbReference type="EMBL" id="CP001403">
    <property type="protein sequence ID" value="ACP46034.1"/>
    <property type="molecule type" value="Genomic_DNA"/>
</dbReference>
<dbReference type="RefSeq" id="WP_009988725.1">
    <property type="nucleotide sequence ID" value="NC_012622.1"/>
</dbReference>
<dbReference type="SMR" id="C3N740"/>
<dbReference type="KEGG" id="siy:YG5714_1777"/>
<dbReference type="HOGENOM" id="CLU_179456_2_0_2"/>
<dbReference type="Proteomes" id="UP000002308">
    <property type="component" value="Chromosome"/>
</dbReference>
<dbReference type="GO" id="GO:0005737">
    <property type="term" value="C:cytoplasm"/>
    <property type="evidence" value="ECO:0007669"/>
    <property type="project" value="UniProtKB-SubCell"/>
</dbReference>
<dbReference type="GO" id="GO:0000428">
    <property type="term" value="C:DNA-directed RNA polymerase complex"/>
    <property type="evidence" value="ECO:0007669"/>
    <property type="project" value="UniProtKB-KW"/>
</dbReference>
<dbReference type="GO" id="GO:0003677">
    <property type="term" value="F:DNA binding"/>
    <property type="evidence" value="ECO:0007669"/>
    <property type="project" value="InterPro"/>
</dbReference>
<dbReference type="GO" id="GO:0003899">
    <property type="term" value="F:DNA-directed RNA polymerase activity"/>
    <property type="evidence" value="ECO:0007669"/>
    <property type="project" value="UniProtKB-UniRule"/>
</dbReference>
<dbReference type="GO" id="GO:0008270">
    <property type="term" value="F:zinc ion binding"/>
    <property type="evidence" value="ECO:0007669"/>
    <property type="project" value="UniProtKB-UniRule"/>
</dbReference>
<dbReference type="GO" id="GO:0006351">
    <property type="term" value="P:DNA-templated transcription"/>
    <property type="evidence" value="ECO:0007669"/>
    <property type="project" value="UniProtKB-UniRule"/>
</dbReference>
<dbReference type="Gene3D" id="2.20.28.30">
    <property type="entry name" value="RNA polymerase ii, chain L"/>
    <property type="match status" value="1"/>
</dbReference>
<dbReference type="HAMAP" id="MF_00615">
    <property type="entry name" value="RNApol_arch_Rpo12"/>
    <property type="match status" value="1"/>
</dbReference>
<dbReference type="InterPro" id="IPR006591">
    <property type="entry name" value="RNAP_P/RPABC4"/>
</dbReference>
<dbReference type="InterPro" id="IPR029040">
    <property type="entry name" value="RPABC4/Spt4"/>
</dbReference>
<dbReference type="InterPro" id="IPR023464">
    <property type="entry name" value="Rpo12"/>
</dbReference>
<dbReference type="NCBIfam" id="NF001604">
    <property type="entry name" value="PRK00398.1-1"/>
    <property type="match status" value="1"/>
</dbReference>
<dbReference type="SMART" id="SM00659">
    <property type="entry name" value="RPOLCX"/>
    <property type="match status" value="1"/>
</dbReference>
<dbReference type="SUPFAM" id="SSF63393">
    <property type="entry name" value="RNA polymerase subunits"/>
    <property type="match status" value="1"/>
</dbReference>
<accession>C3N740</accession>
<comment type="function">
    <text evidence="1">DNA-dependent RNA polymerase (RNAP) catalyzes the transcription of DNA into RNA using the four ribonucleoside triphosphates as substrates.</text>
</comment>
<comment type="catalytic activity">
    <reaction evidence="1">
        <text>RNA(n) + a ribonucleoside 5'-triphosphate = RNA(n+1) + diphosphate</text>
        <dbReference type="Rhea" id="RHEA:21248"/>
        <dbReference type="Rhea" id="RHEA-COMP:14527"/>
        <dbReference type="Rhea" id="RHEA-COMP:17342"/>
        <dbReference type="ChEBI" id="CHEBI:33019"/>
        <dbReference type="ChEBI" id="CHEBI:61557"/>
        <dbReference type="ChEBI" id="CHEBI:140395"/>
        <dbReference type="EC" id="2.7.7.6"/>
    </reaction>
</comment>
<comment type="cofactor">
    <cofactor evidence="1">
        <name>Zn(2+)</name>
        <dbReference type="ChEBI" id="CHEBI:29105"/>
    </cofactor>
    <text evidence="1">Binds 1 zinc ion.</text>
</comment>
<comment type="subunit">
    <text evidence="1">Part of the RNA polymerase complex.</text>
</comment>
<comment type="subcellular location">
    <subcellularLocation>
        <location evidence="1">Cytoplasm</location>
    </subcellularLocation>
</comment>
<comment type="similarity">
    <text evidence="1">Belongs to the archaeal Rpo12/eukaryotic RPC10 RNA polymerase subunit family.</text>
</comment>
<sequence>MAVYRCGKCWKTFTDEQLKVLPGVRCPYCGYKIIFMVRKPTIKIVKAI</sequence>
<reference key="1">
    <citation type="journal article" date="2009" name="Proc. Natl. Acad. Sci. U.S.A.">
        <title>Biogeography of the Sulfolobus islandicus pan-genome.</title>
        <authorList>
            <person name="Reno M.L."/>
            <person name="Held N.L."/>
            <person name="Fields C.J."/>
            <person name="Burke P.V."/>
            <person name="Whitaker R.J."/>
        </authorList>
    </citation>
    <scope>NUCLEOTIDE SEQUENCE [LARGE SCALE GENOMIC DNA]</scope>
    <source>
        <strain>Y.G.57.14 / Yellowstone #1</strain>
    </source>
</reference>
<proteinExistence type="inferred from homology"/>